<feature type="signal peptide" evidence="1">
    <location>
        <begin position="1"/>
        <end position="19"/>
    </location>
</feature>
<feature type="chain" id="PRO_0000028059" description="Plasminogen">
    <location>
        <begin position="20"/>
        <end position="810"/>
    </location>
</feature>
<feature type="chain" id="PRO_0000028060" description="Plasmin heavy chain A">
    <location>
        <begin position="20"/>
        <end position="580"/>
    </location>
</feature>
<feature type="peptide" id="PRO_0000028061" description="Activation peptide">
    <location>
        <begin position="20"/>
        <end position="96"/>
    </location>
</feature>
<feature type="chain" id="PRO_0000028062" description="Plasmin heavy chain A, short form">
    <location>
        <begin position="97"/>
        <end position="580"/>
    </location>
</feature>
<feature type="chain" id="PRO_0000028063" description="Plasmin light chain B">
    <location>
        <begin position="581"/>
        <end position="810"/>
    </location>
</feature>
<feature type="domain" description="PAN" evidence="5">
    <location>
        <begin position="20"/>
        <end position="98"/>
    </location>
</feature>
<feature type="domain" description="Kringle 1" evidence="3">
    <location>
        <begin position="103"/>
        <end position="181"/>
    </location>
</feature>
<feature type="domain" description="Kringle 2" evidence="3">
    <location>
        <begin position="184"/>
        <end position="262"/>
    </location>
</feature>
<feature type="domain" description="Kringle 3" evidence="3">
    <location>
        <begin position="275"/>
        <end position="352"/>
    </location>
</feature>
<feature type="domain" description="Kringle 4" evidence="3">
    <location>
        <begin position="377"/>
        <end position="454"/>
    </location>
</feature>
<feature type="domain" description="Kringle 5" evidence="3">
    <location>
        <begin position="481"/>
        <end position="560"/>
    </location>
</feature>
<feature type="domain" description="Peptidase S1" evidence="4">
    <location>
        <begin position="581"/>
        <end position="808"/>
    </location>
</feature>
<feature type="region of interest" description="Disordered" evidence="6">
    <location>
        <begin position="125"/>
        <end position="145"/>
    </location>
</feature>
<feature type="compositionally biased region" description="Polar residues" evidence="6">
    <location>
        <begin position="125"/>
        <end position="141"/>
    </location>
</feature>
<feature type="active site" description="Charge relay system" evidence="1">
    <location>
        <position position="622"/>
    </location>
</feature>
<feature type="active site" description="Charge relay system" evidence="1">
    <location>
        <position position="665"/>
    </location>
</feature>
<feature type="active site" description="Charge relay system" evidence="1">
    <location>
        <position position="760"/>
    </location>
</feature>
<feature type="binding site" evidence="1">
    <location>
        <position position="136"/>
    </location>
    <ligand>
        <name>L-lysine</name>
        <dbReference type="ChEBI" id="CHEBI:32551"/>
    </ligand>
</feature>
<feature type="binding site" evidence="1">
    <location>
        <position position="158"/>
    </location>
    <ligand>
        <name>L-lysine</name>
        <dbReference type="ChEBI" id="CHEBI:32551"/>
    </ligand>
</feature>
<feature type="binding site" evidence="1">
    <location>
        <position position="172"/>
    </location>
    <ligand>
        <name>L-lysine</name>
        <dbReference type="ChEBI" id="CHEBI:32551"/>
    </ligand>
</feature>
<feature type="binding site" evidence="1">
    <location>
        <position position="432"/>
    </location>
    <ligand>
        <name>L-lysine</name>
        <dbReference type="ChEBI" id="CHEBI:32551"/>
    </ligand>
</feature>
<feature type="binding site" evidence="1">
    <location>
        <position position="445"/>
    </location>
    <ligand>
        <name>L-lysine</name>
        <dbReference type="ChEBI" id="CHEBI:32551"/>
    </ligand>
</feature>
<feature type="site" description="Interacts with fibrin" evidence="1">
    <location>
        <position position="134"/>
    </location>
</feature>
<feature type="site" description="Interacts with fibrin" evidence="1">
    <location>
        <position position="136"/>
    </location>
</feature>
<feature type="modified residue" description="Phosphoserine" evidence="2">
    <location>
        <position position="597"/>
    </location>
</feature>
<feature type="modified residue" description="Phosphoserine" evidence="2">
    <location>
        <position position="688"/>
    </location>
</feature>
<feature type="glycosylation site" description="O-linked (GalNAc...) threonine" evidence="1">
    <location>
        <position position="365"/>
    </location>
</feature>
<feature type="disulfide bond" evidence="1">
    <location>
        <begin position="49"/>
        <end position="73"/>
    </location>
</feature>
<feature type="disulfide bond" evidence="1">
    <location>
        <begin position="53"/>
        <end position="61"/>
    </location>
</feature>
<feature type="disulfide bond" evidence="1">
    <location>
        <begin position="103"/>
        <end position="181"/>
    </location>
</feature>
<feature type="disulfide bond" evidence="1">
    <location>
        <begin position="124"/>
        <end position="164"/>
    </location>
</feature>
<feature type="disulfide bond" evidence="1">
    <location>
        <begin position="152"/>
        <end position="176"/>
    </location>
</feature>
<feature type="disulfide bond" evidence="1">
    <location>
        <begin position="185"/>
        <end position="262"/>
    </location>
</feature>
<feature type="disulfide bond" evidence="1">
    <location>
        <begin position="188"/>
        <end position="316"/>
    </location>
</feature>
<feature type="disulfide bond" evidence="1">
    <location>
        <begin position="206"/>
        <end position="245"/>
    </location>
</feature>
<feature type="disulfide bond" evidence="1">
    <location>
        <begin position="234"/>
        <end position="257"/>
    </location>
</feature>
<feature type="disulfide bond" evidence="1">
    <location>
        <begin position="275"/>
        <end position="352"/>
    </location>
</feature>
<feature type="disulfide bond" evidence="1">
    <location>
        <begin position="296"/>
        <end position="335"/>
    </location>
</feature>
<feature type="disulfide bond" evidence="1">
    <location>
        <begin position="324"/>
        <end position="347"/>
    </location>
</feature>
<feature type="disulfide bond" evidence="1">
    <location>
        <begin position="377"/>
        <end position="454"/>
    </location>
</feature>
<feature type="disulfide bond" evidence="1">
    <location>
        <begin position="398"/>
        <end position="437"/>
    </location>
</feature>
<feature type="disulfide bond" evidence="1">
    <location>
        <begin position="426"/>
        <end position="449"/>
    </location>
</feature>
<feature type="disulfide bond" evidence="1">
    <location>
        <begin position="481"/>
        <end position="560"/>
    </location>
</feature>
<feature type="disulfide bond" evidence="1">
    <location>
        <begin position="502"/>
        <end position="543"/>
    </location>
</feature>
<feature type="disulfide bond" evidence="1">
    <location>
        <begin position="531"/>
        <end position="555"/>
    </location>
</feature>
<feature type="disulfide bond" description="Interchain (between A and B chains)" evidence="1">
    <location>
        <begin position="567"/>
        <end position="685"/>
    </location>
</feature>
<feature type="disulfide bond" description="Interchain (between A and B chains)" evidence="1">
    <location>
        <begin position="577"/>
        <end position="585"/>
    </location>
</feature>
<feature type="disulfide bond" evidence="1">
    <location>
        <begin position="607"/>
        <end position="623"/>
    </location>
</feature>
<feature type="disulfide bond" evidence="1">
    <location>
        <begin position="699"/>
        <end position="766"/>
    </location>
</feature>
<feature type="disulfide bond" evidence="1">
    <location>
        <begin position="729"/>
        <end position="745"/>
    </location>
</feature>
<feature type="disulfide bond" evidence="1">
    <location>
        <begin position="756"/>
        <end position="784"/>
    </location>
</feature>
<comment type="function">
    <text evidence="1">Plasmin dissolves the fibrin of blood clots and acts as a proteolytic factor in a variety of other processes including embryonic development, tissue remodeling, tumor invasion, and inflammation. In ovulation, weakens the walls of the Graafian follicle. It activates the urokinase-type plasminogen activator, collagenases and several complement zymogens, such as C1, C4 and C5. Cleavage of fibronectin and laminin leads to cell detachment and apoptosis. Also cleaves fibrin, thrombospondin and von Willebrand factor. Its role in tissue remodeling and tumor invasion may be modulated by CSPG4. Binds to cells (By similarity).</text>
</comment>
<comment type="catalytic activity">
    <reaction>
        <text>Preferential cleavage: Lys-|-Xaa &gt; Arg-|-Xaa, higher selectivity than trypsin. Converts fibrin into soluble products.</text>
        <dbReference type="EC" id="3.4.21.7"/>
    </reaction>
</comment>
<comment type="activity regulation">
    <text>Converted into plasmin by plasminogen activators, both plasminogen and its activator being bound to fibrin. Activated with catalytic amounts of streptokinase.</text>
</comment>
<comment type="subunit">
    <text evidence="2">Interacts with CSPG4 and AMOT. Interacts (via the Kringle domains) with HRG; the interaction tethers PLG to the cell surface and enhances its activation. Interacts (via Kringle 4 domain) with ADA; the interaction stimulates PLG activation when in complex with DPP4. Angiostatin: Interacts with ATP5F1A; the interaction inhibits most of the angiogenic effects of angiostatin.</text>
</comment>
<comment type="subcellular location">
    <subcellularLocation>
        <location evidence="1">Secreted</location>
    </subcellularLocation>
    <text evidence="1">Locates to the cell surface where it is proteolytically cleaved to produce the active plasmin. Interaction with HRG tethers it to the cell surface (By similarity).</text>
</comment>
<comment type="domain">
    <text evidence="1">Kringle domains mediate interaction with CSPG4.</text>
</comment>
<comment type="PTM">
    <text evidence="1">In the presence of the inhibitor, the activation involves only cleavage after Arg-580, yielding two chains held together by two disulfide bonds. In the absence of the inhibitor, the activation involves additionally the removal of the activation peptide (By similarity).</text>
</comment>
<comment type="miscellaneous">
    <text>Plasmin is inactivated by alpha-2-antiplasmin immediately after dissociation from the clot.</text>
</comment>
<comment type="miscellaneous">
    <text>In the presence of the inhibitor, the activation involves only cleavage after Arg-580, resulting in 2 chains held together by 2 disulfide bonds. Without the inhibitor, the activation also involves removal of the activation peptide.</text>
</comment>
<comment type="similarity">
    <text evidence="4">Belongs to the peptidase S1 family. Plasminogen subfamily.</text>
</comment>
<protein>
    <recommendedName>
        <fullName>Plasminogen</fullName>
        <ecNumber>3.4.21.7</ecNumber>
    </recommendedName>
    <component>
        <recommendedName>
            <fullName>Plasmin heavy chain A</fullName>
        </recommendedName>
    </component>
    <component>
        <recommendedName>
            <fullName>Activation peptide</fullName>
        </recommendedName>
    </component>
    <component>
        <recommendedName>
            <fullName>Plasmin heavy chain A, short form</fullName>
        </recommendedName>
    </component>
    <component>
        <recommendedName>
            <fullName>Plasmin light chain B</fullName>
        </recommendedName>
    </component>
</protein>
<accession>P12545</accession>
<dbReference type="EC" id="3.4.21.7"/>
<dbReference type="EMBL" id="J04697">
    <property type="protein sequence ID" value="AAA36901.1"/>
    <property type="molecule type" value="mRNA"/>
</dbReference>
<dbReference type="PIR" id="B32869">
    <property type="entry name" value="B30848"/>
</dbReference>
<dbReference type="RefSeq" id="NP_001036540.1">
    <property type="nucleotide sequence ID" value="NM_001043075.1"/>
</dbReference>
<dbReference type="SMR" id="P12545"/>
<dbReference type="FunCoup" id="P12545">
    <property type="interactions" value="547"/>
</dbReference>
<dbReference type="STRING" id="9544.ENSMMUP00000063092"/>
<dbReference type="MEROPS" id="S01.233"/>
<dbReference type="GlyCosmos" id="P12545">
    <property type="glycosylation" value="1 site, No reported glycans"/>
</dbReference>
<dbReference type="PaxDb" id="9544-ENSMMUP00000022281"/>
<dbReference type="GeneID" id="703891"/>
<dbReference type="KEGG" id="mcc:703891"/>
<dbReference type="CTD" id="5340"/>
<dbReference type="eggNOG" id="ENOG502QVNP">
    <property type="taxonomic scope" value="Eukaryota"/>
</dbReference>
<dbReference type="InParanoid" id="P12545"/>
<dbReference type="OrthoDB" id="41905at2759"/>
<dbReference type="Proteomes" id="UP000006718">
    <property type="component" value="Unassembled WGS sequence"/>
</dbReference>
<dbReference type="GO" id="GO:0005615">
    <property type="term" value="C:extracellular space"/>
    <property type="evidence" value="ECO:0000318"/>
    <property type="project" value="GO_Central"/>
</dbReference>
<dbReference type="GO" id="GO:0004175">
    <property type="term" value="F:endopeptidase activity"/>
    <property type="evidence" value="ECO:0000318"/>
    <property type="project" value="GO_Central"/>
</dbReference>
<dbReference type="GO" id="GO:0004252">
    <property type="term" value="F:serine-type endopeptidase activity"/>
    <property type="evidence" value="ECO:0007669"/>
    <property type="project" value="UniProtKB-EC"/>
</dbReference>
<dbReference type="GO" id="GO:0005102">
    <property type="term" value="F:signaling receptor binding"/>
    <property type="evidence" value="ECO:0000318"/>
    <property type="project" value="GO_Central"/>
</dbReference>
<dbReference type="GO" id="GO:0007596">
    <property type="term" value="P:blood coagulation"/>
    <property type="evidence" value="ECO:0007669"/>
    <property type="project" value="UniProtKB-KW"/>
</dbReference>
<dbReference type="GO" id="GO:0042730">
    <property type="term" value="P:fibrinolysis"/>
    <property type="evidence" value="ECO:0007669"/>
    <property type="project" value="UniProtKB-KW"/>
</dbReference>
<dbReference type="GO" id="GO:0006508">
    <property type="term" value="P:proteolysis"/>
    <property type="evidence" value="ECO:0000318"/>
    <property type="project" value="GO_Central"/>
</dbReference>
<dbReference type="GO" id="GO:0048771">
    <property type="term" value="P:tissue remodeling"/>
    <property type="evidence" value="ECO:0007669"/>
    <property type="project" value="UniProtKB-KW"/>
</dbReference>
<dbReference type="CDD" id="cd00108">
    <property type="entry name" value="KR"/>
    <property type="match status" value="5"/>
</dbReference>
<dbReference type="CDD" id="cd01099">
    <property type="entry name" value="PAN_AP_HGF"/>
    <property type="match status" value="1"/>
</dbReference>
<dbReference type="CDD" id="cd00190">
    <property type="entry name" value="Tryp_SPc"/>
    <property type="match status" value="1"/>
</dbReference>
<dbReference type="FunFam" id="2.40.20.10:FF:000005">
    <property type="entry name" value="Plasminogen"/>
    <property type="match status" value="1"/>
</dbReference>
<dbReference type="FunFam" id="2.40.20.10:FF:000011">
    <property type="entry name" value="Plasminogen"/>
    <property type="match status" value="1"/>
</dbReference>
<dbReference type="FunFam" id="2.40.20.10:FF:000013">
    <property type="entry name" value="Plasminogen"/>
    <property type="match status" value="1"/>
</dbReference>
<dbReference type="FunFam" id="2.40.20.10:FF:000014">
    <property type="entry name" value="Plasminogen"/>
    <property type="match status" value="1"/>
</dbReference>
<dbReference type="FunFam" id="3.50.4.10:FF:000011">
    <property type="entry name" value="Plasminogen"/>
    <property type="match status" value="1"/>
</dbReference>
<dbReference type="FunFam" id="2.40.10.10:FF:000003">
    <property type="entry name" value="Transmembrane serine protease 3"/>
    <property type="match status" value="1"/>
</dbReference>
<dbReference type="Gene3D" id="3.50.4.10">
    <property type="entry name" value="Hepatocyte Growth Factor"/>
    <property type="match status" value="1"/>
</dbReference>
<dbReference type="Gene3D" id="2.40.20.10">
    <property type="entry name" value="Plasminogen Kringle 4"/>
    <property type="match status" value="4"/>
</dbReference>
<dbReference type="Gene3D" id="2.40.10.10">
    <property type="entry name" value="Trypsin-like serine proteases"/>
    <property type="match status" value="1"/>
</dbReference>
<dbReference type="InterPro" id="IPR000001">
    <property type="entry name" value="Kringle"/>
</dbReference>
<dbReference type="InterPro" id="IPR013806">
    <property type="entry name" value="Kringle-like"/>
</dbReference>
<dbReference type="InterPro" id="IPR018056">
    <property type="entry name" value="Kringle_CS"/>
</dbReference>
<dbReference type="InterPro" id="IPR038178">
    <property type="entry name" value="Kringle_sf"/>
</dbReference>
<dbReference type="InterPro" id="IPR003609">
    <property type="entry name" value="Pan_app"/>
</dbReference>
<dbReference type="InterPro" id="IPR023317">
    <property type="entry name" value="Pept_S1A_plasmin"/>
</dbReference>
<dbReference type="InterPro" id="IPR009003">
    <property type="entry name" value="Peptidase_S1_PA"/>
</dbReference>
<dbReference type="InterPro" id="IPR043504">
    <property type="entry name" value="Peptidase_S1_PA_chymotrypsin"/>
</dbReference>
<dbReference type="InterPro" id="IPR001314">
    <property type="entry name" value="Peptidase_S1A"/>
</dbReference>
<dbReference type="InterPro" id="IPR050759">
    <property type="entry name" value="Serine_protease_kringle"/>
</dbReference>
<dbReference type="InterPro" id="IPR001254">
    <property type="entry name" value="Trypsin_dom"/>
</dbReference>
<dbReference type="InterPro" id="IPR018114">
    <property type="entry name" value="TRYPSIN_HIS"/>
</dbReference>
<dbReference type="InterPro" id="IPR033116">
    <property type="entry name" value="TRYPSIN_SER"/>
</dbReference>
<dbReference type="PANTHER" id="PTHR24261:SF13">
    <property type="entry name" value="PLASMINOGEN"/>
    <property type="match status" value="1"/>
</dbReference>
<dbReference type="PANTHER" id="PTHR24261">
    <property type="entry name" value="PLASMINOGEN-RELATED"/>
    <property type="match status" value="1"/>
</dbReference>
<dbReference type="Pfam" id="PF00051">
    <property type="entry name" value="Kringle"/>
    <property type="match status" value="5"/>
</dbReference>
<dbReference type="Pfam" id="PF00024">
    <property type="entry name" value="PAN_1"/>
    <property type="match status" value="1"/>
</dbReference>
<dbReference type="Pfam" id="PF00089">
    <property type="entry name" value="Trypsin"/>
    <property type="match status" value="1"/>
</dbReference>
<dbReference type="PIRSF" id="PIRSF001150">
    <property type="entry name" value="Plasmin"/>
    <property type="match status" value="1"/>
</dbReference>
<dbReference type="PRINTS" id="PR00722">
    <property type="entry name" value="CHYMOTRYPSIN"/>
</dbReference>
<dbReference type="PRINTS" id="PR00018">
    <property type="entry name" value="KRINGLE"/>
</dbReference>
<dbReference type="SMART" id="SM00130">
    <property type="entry name" value="KR"/>
    <property type="match status" value="5"/>
</dbReference>
<dbReference type="SMART" id="SM00473">
    <property type="entry name" value="PAN_AP"/>
    <property type="match status" value="1"/>
</dbReference>
<dbReference type="SMART" id="SM00020">
    <property type="entry name" value="Tryp_SPc"/>
    <property type="match status" value="1"/>
</dbReference>
<dbReference type="SUPFAM" id="SSF57414">
    <property type="entry name" value="Hairpin loop containing domain-like"/>
    <property type="match status" value="1"/>
</dbReference>
<dbReference type="SUPFAM" id="SSF57440">
    <property type="entry name" value="Kringle-like"/>
    <property type="match status" value="5"/>
</dbReference>
<dbReference type="SUPFAM" id="SSF50494">
    <property type="entry name" value="Trypsin-like serine proteases"/>
    <property type="match status" value="1"/>
</dbReference>
<dbReference type="PROSITE" id="PS00021">
    <property type="entry name" value="KRINGLE_1"/>
    <property type="match status" value="5"/>
</dbReference>
<dbReference type="PROSITE" id="PS50070">
    <property type="entry name" value="KRINGLE_2"/>
    <property type="match status" value="5"/>
</dbReference>
<dbReference type="PROSITE" id="PS50948">
    <property type="entry name" value="PAN"/>
    <property type="match status" value="1"/>
</dbReference>
<dbReference type="PROSITE" id="PS50240">
    <property type="entry name" value="TRYPSIN_DOM"/>
    <property type="match status" value="1"/>
</dbReference>
<dbReference type="PROSITE" id="PS00134">
    <property type="entry name" value="TRYPSIN_HIS"/>
    <property type="match status" value="1"/>
</dbReference>
<dbReference type="PROSITE" id="PS00135">
    <property type="entry name" value="TRYPSIN_SER"/>
    <property type="match status" value="1"/>
</dbReference>
<evidence type="ECO:0000250" key="1"/>
<evidence type="ECO:0000250" key="2">
    <source>
        <dbReference type="UniProtKB" id="P00747"/>
    </source>
</evidence>
<evidence type="ECO:0000255" key="3">
    <source>
        <dbReference type="PROSITE-ProRule" id="PRU00121"/>
    </source>
</evidence>
<evidence type="ECO:0000255" key="4">
    <source>
        <dbReference type="PROSITE-ProRule" id="PRU00274"/>
    </source>
</evidence>
<evidence type="ECO:0000255" key="5">
    <source>
        <dbReference type="PROSITE-ProRule" id="PRU00315"/>
    </source>
</evidence>
<evidence type="ECO:0000256" key="6">
    <source>
        <dbReference type="SAM" id="MobiDB-lite"/>
    </source>
</evidence>
<reference key="1">
    <citation type="journal article" date="1989" name="J. Biol. Chem.">
        <title>Rhesus monkey apolipoprotein(a). Sequence, evolution, and sites of synthesis.</title>
        <authorList>
            <person name="Tomlinson J.E."/>
            <person name="McLean J.W."/>
            <person name="Lawn R.M."/>
        </authorList>
    </citation>
    <scope>NUCLEOTIDE SEQUENCE [MRNA]</scope>
</reference>
<gene>
    <name type="primary">PLG</name>
</gene>
<keyword id="KW-0094">Blood coagulation</keyword>
<keyword id="KW-1015">Disulfide bond</keyword>
<keyword id="KW-0280">Fibrinolysis</keyword>
<keyword id="KW-0325">Glycoprotein</keyword>
<keyword id="KW-0356">Hemostasis</keyword>
<keyword id="KW-0378">Hydrolase</keyword>
<keyword id="KW-0420">Kringle</keyword>
<keyword id="KW-0597">Phosphoprotein</keyword>
<keyword id="KW-0645">Protease</keyword>
<keyword id="KW-1185">Reference proteome</keyword>
<keyword id="KW-0677">Repeat</keyword>
<keyword id="KW-0964">Secreted</keyword>
<keyword id="KW-0720">Serine protease</keyword>
<keyword id="KW-0732">Signal</keyword>
<keyword id="KW-0797">Tissue remodeling</keyword>
<keyword id="KW-0865">Zymogen</keyword>
<organism>
    <name type="scientific">Macaca mulatta</name>
    <name type="common">Rhesus macaque</name>
    <dbReference type="NCBI Taxonomy" id="9544"/>
    <lineage>
        <taxon>Eukaryota</taxon>
        <taxon>Metazoa</taxon>
        <taxon>Chordata</taxon>
        <taxon>Craniata</taxon>
        <taxon>Vertebrata</taxon>
        <taxon>Euteleostomi</taxon>
        <taxon>Mammalia</taxon>
        <taxon>Eutheria</taxon>
        <taxon>Euarchontoglires</taxon>
        <taxon>Primates</taxon>
        <taxon>Haplorrhini</taxon>
        <taxon>Catarrhini</taxon>
        <taxon>Cercopithecidae</taxon>
        <taxon>Cercopithecinae</taxon>
        <taxon>Macaca</taxon>
    </lineage>
</organism>
<name>PLMN_MACMU</name>
<sequence length="810" mass="90255">MEHKEVVLLLLLFLKSGQGEPLDDYVNTKGASLFSITKKQLGAGSIEECAAKCEEEEEFTCRSFQYHSKEQQCVIMAENRKSSIVFRMRDVVLFEKKVYLSECKTGNGKNYRGTMSKTRTGITCQKWSSTSPHRPTFSPATHPSEGLEENYCRNPDNDGQGPWCYTTDPEERFDYCDIPECEDECMHCSGENYDGKISKTMSGLECQAWDSQSPHAHGYIPSKFPNKNLKKNYCRNPDGEPRPWCFTTDPNKRWELCDIPRCTTPPPSSGPTYQCLKGTGENYRGDVAVTVSGHTCHGWSAQTPHTHNRTPENFPCKNLDENYCRNPDGEKAPWCYTTNSQVRWEYCKIPSCESSPVSTEPLDPTAPPELTPVVQECYHGDGQSYRGTSSTTTTGKKCQSWSSMTPHWHEKTPENFPNAGLTMNYCRNPDADKGPWCFTTDPSVRWEYCNLKKCSGTEGSVAAPPPVAQLPDAETPSEEDCMFGNGKGYRGKKATTVTGTPCQEWAAQEPHSHRIFTPETNPRAGLEKNYCRNPDGDVGGPWCYTTNPRKLFDYCDVPQCAASSFDCGKPQVEPKKCPGRVVGGCVAYPHSWPWQISLRTRLGMHFCGGTLISPEWVLTAAHCLEKSSRPSFYKVILGAHREVHLEPHVQEIEVSKMFSEPARADIALLKLSSPAIITDKVIPACLPSPNYVVADRTECFITGWGETQGTYGAGLLKEARLPVIENKVCNRYEFLNGTVKTTELCAGHLAGGTDSCQGDSGGPLVCFEKDKYILQGVTSWGLGCARPNKPGVYVRVSRFVTWIEGVMRNN</sequence>
<proteinExistence type="evidence at transcript level"/>